<evidence type="ECO:0000255" key="1"/>
<evidence type="ECO:0000305" key="2"/>
<protein>
    <recommendedName>
        <fullName>Protein NirI</fullName>
    </recommendedName>
</protein>
<dbReference type="EMBL" id="CP000489">
    <property type="protein sequence ID" value="ABL70573.1"/>
    <property type="molecule type" value="Genomic_DNA"/>
</dbReference>
<dbReference type="EMBL" id="U05002">
    <property type="protein sequence ID" value="AAA93117.1"/>
    <property type="molecule type" value="Genomic_DNA"/>
</dbReference>
<dbReference type="RefSeq" id="WP_011748766.1">
    <property type="nucleotide sequence ID" value="NC_008686.1"/>
</dbReference>
<dbReference type="STRING" id="318586.Pden_2486"/>
<dbReference type="EnsemblBacteria" id="ABL70573">
    <property type="protein sequence ID" value="ABL70573"/>
    <property type="gene ID" value="Pden_2486"/>
</dbReference>
<dbReference type="KEGG" id="pde:Pden_2486"/>
<dbReference type="eggNOG" id="COG0348">
    <property type="taxonomic scope" value="Bacteria"/>
</dbReference>
<dbReference type="eggNOG" id="COG3901">
    <property type="taxonomic scope" value="Bacteria"/>
</dbReference>
<dbReference type="HOGENOM" id="CLU_013077_0_0_5"/>
<dbReference type="OrthoDB" id="9806398at2"/>
<dbReference type="Proteomes" id="UP000000361">
    <property type="component" value="Chromosome 1"/>
</dbReference>
<dbReference type="GO" id="GO:0005886">
    <property type="term" value="C:plasma membrane"/>
    <property type="evidence" value="ECO:0007669"/>
    <property type="project" value="UniProtKB-SubCell"/>
</dbReference>
<dbReference type="GO" id="GO:0003677">
    <property type="term" value="F:DNA binding"/>
    <property type="evidence" value="ECO:0007669"/>
    <property type="project" value="InterPro"/>
</dbReference>
<dbReference type="GO" id="GO:0010181">
    <property type="term" value="F:FMN binding"/>
    <property type="evidence" value="ECO:0007669"/>
    <property type="project" value="InterPro"/>
</dbReference>
<dbReference type="GO" id="GO:0045893">
    <property type="term" value="P:positive regulation of DNA-templated transcription"/>
    <property type="evidence" value="ECO:0007669"/>
    <property type="project" value="InterPro"/>
</dbReference>
<dbReference type="InterPro" id="IPR017896">
    <property type="entry name" value="4Fe4S_Fe-S-bd"/>
</dbReference>
<dbReference type="InterPro" id="IPR007329">
    <property type="entry name" value="FMN-bd"/>
</dbReference>
<dbReference type="InterPro" id="IPR011399">
    <property type="entry name" value="NosR"/>
</dbReference>
<dbReference type="InterPro" id="IPR052378">
    <property type="entry name" value="NosR_regulator"/>
</dbReference>
<dbReference type="PANTHER" id="PTHR30224">
    <property type="entry name" value="ELECTRON TRANSPORT PROTEIN"/>
    <property type="match status" value="1"/>
</dbReference>
<dbReference type="PANTHER" id="PTHR30224:SF4">
    <property type="entry name" value="ELECTRON TRANSPORT PROTEIN YCCM-RELATED"/>
    <property type="match status" value="1"/>
</dbReference>
<dbReference type="Pfam" id="PF12801">
    <property type="entry name" value="Fer4_5"/>
    <property type="match status" value="2"/>
</dbReference>
<dbReference type="PIRSF" id="PIRSF036354">
    <property type="entry name" value="NosR"/>
    <property type="match status" value="1"/>
</dbReference>
<dbReference type="SMART" id="SM00900">
    <property type="entry name" value="FMN_bind"/>
    <property type="match status" value="1"/>
</dbReference>
<dbReference type="SUPFAM" id="SSF54862">
    <property type="entry name" value="4Fe-4S ferredoxins"/>
    <property type="match status" value="1"/>
</dbReference>
<keyword id="KW-1003">Cell membrane</keyword>
<keyword id="KW-0472">Membrane</keyword>
<keyword id="KW-1185">Reference proteome</keyword>
<keyword id="KW-0732">Signal</keyword>
<keyword id="KW-0812">Transmembrane</keyword>
<keyword id="KW-1133">Transmembrane helix</keyword>
<reference key="1">
    <citation type="submission" date="2006-12" db="EMBL/GenBank/DDBJ databases">
        <title>Complete sequence of chromosome 1 of Paracoccus denitrificans PD1222.</title>
        <authorList>
            <person name="Copeland A."/>
            <person name="Lucas S."/>
            <person name="Lapidus A."/>
            <person name="Barry K."/>
            <person name="Detter J.C."/>
            <person name="Glavina del Rio T."/>
            <person name="Hammon N."/>
            <person name="Israni S."/>
            <person name="Dalin E."/>
            <person name="Tice H."/>
            <person name="Pitluck S."/>
            <person name="Munk A.C."/>
            <person name="Brettin T."/>
            <person name="Bruce D."/>
            <person name="Han C."/>
            <person name="Tapia R."/>
            <person name="Gilna P."/>
            <person name="Schmutz J."/>
            <person name="Larimer F."/>
            <person name="Land M."/>
            <person name="Hauser L."/>
            <person name="Kyrpides N."/>
            <person name="Lykidis A."/>
            <person name="Spiro S."/>
            <person name="Richardson D.J."/>
            <person name="Moir J.W.B."/>
            <person name="Ferguson S.J."/>
            <person name="van Spanning R.J.M."/>
            <person name="Richardson P."/>
        </authorList>
    </citation>
    <scope>NUCLEOTIDE SEQUENCE [LARGE SCALE GENOMIC DNA]</scope>
    <source>
        <strain>Pd 1222</strain>
    </source>
</reference>
<reference key="2">
    <citation type="journal article" date="1994" name="Antonie Van Leeuwenhoek">
        <title>Isolation, sequencing and mutational analysis of a gene cluster involved in nitrite reduction in Paracoccus denitrificans.</title>
        <authorList>
            <person name="de Boer A.P.N."/>
            <person name="Reijnders W.N.M."/>
            <person name="Kuenen J.G."/>
            <person name="Stouthamer A.H."/>
            <person name="van Spanning R.J.M."/>
        </authorList>
    </citation>
    <scope>NUCLEOTIDE SEQUENCE [GENOMIC DNA] OF 1-143</scope>
</reference>
<feature type="signal peptide" evidence="1">
    <location>
        <begin position="1"/>
        <end position="30"/>
    </location>
</feature>
<feature type="chain" id="PRO_0000096861" description="Protein NirI">
    <location>
        <begin position="31"/>
        <end position="681"/>
    </location>
</feature>
<feature type="transmembrane region" description="Helical" evidence="1">
    <location>
        <begin position="394"/>
        <end position="414"/>
    </location>
</feature>
<feature type="transmembrane region" description="Helical" evidence="1">
    <location>
        <begin position="436"/>
        <end position="456"/>
    </location>
</feature>
<feature type="transmembrane region" description="Helical" evidence="1">
    <location>
        <begin position="468"/>
        <end position="488"/>
    </location>
</feature>
<feature type="transmembrane region" description="Helical" evidence="1">
    <location>
        <begin position="535"/>
        <end position="555"/>
    </location>
</feature>
<feature type="transmembrane region" description="Helical" evidence="1">
    <location>
        <begin position="568"/>
        <end position="588"/>
    </location>
</feature>
<feature type="sequence conflict" description="In Ref. 2; AAA93117." evidence="2" ref="2">
    <original>PQG</original>
    <variation>RRA</variation>
    <location>
        <begin position="100"/>
        <end position="102"/>
    </location>
</feature>
<name>NIRI_PARDP</name>
<comment type="subcellular location">
    <subcellularLocation>
        <location evidence="2">Cell membrane</location>
        <topology evidence="2">Multi-pass membrane protein</topology>
    </subcellularLocation>
</comment>
<comment type="similarity">
    <text evidence="2">To P.stutzeri NosR.</text>
</comment>
<gene>
    <name type="primary">nirI</name>
    <name type="ordered locus">Pden_2486</name>
</gene>
<proteinExistence type="inferred from homology"/>
<sequence length="681" mass="73240">MAMPGKSSHAPSRLLLALLTLILLALPARPEPLAAPDAALAQALFGADGPVVLDRRETPVPGWGVSRDGRMLGVIGSTWEIAATTGYSGKPLDVLVAVTPQGVIAGARLVRQTEPVLSLGISEAHIAAYVDGFRGVDLSQGEGQGRALPDVISRATVSTGVIRDGILRSARVLAQAQGLGGGGIDRVGYRPATWADLLAEGAFGHALVSMADAARAFAGAKVPVEPSDAPFLDLYAGLIDPPTVGRNLLGAQDFTAAAGALQPGQALVAVLSRGLYSPRGTEWRRSGRFERIAFEQGALRIEPDDGDFVMVEKLALPDAPAFKEISLFRLNIDPLAGGIDPRRPFDLVVTATRPLAAGDEAALPIRATIRLPEAYAVAEAPAVPLWQEFWLKKIPGIAVVAAMLFVLALILFGQEALVRRPMLWRRVRLGFLATTLVVLGWGLNGQLSVVQVVAFLNALLSGFRWETFLIEPIIFLIWSAVALGLLFWGRGVFCGWLCPFGALQELANAAAQRLGVRQIAVPQALHERLWVIKYTLFVAIVALSFYSMEQALILAEVEPFKTVISMRFLRAWPFVLFALAVLAGGLFIERFYCRYLCPLGAGLAIPAKLKIFDWLRRRPQCGRECRLCETKCTVGAIDPLGRINPNECVLCLRCQVVMNDPGTCPVLKRRARSAAPTGDAP</sequence>
<accession>Q51699</accession>
<accession>A1B4X9</accession>
<organism>
    <name type="scientific">Paracoccus denitrificans (strain Pd 1222)</name>
    <dbReference type="NCBI Taxonomy" id="318586"/>
    <lineage>
        <taxon>Bacteria</taxon>
        <taxon>Pseudomonadati</taxon>
        <taxon>Pseudomonadota</taxon>
        <taxon>Alphaproteobacteria</taxon>
        <taxon>Rhodobacterales</taxon>
        <taxon>Paracoccaceae</taxon>
        <taxon>Paracoccus</taxon>
    </lineage>
</organism>